<dbReference type="EC" id="1.5.1.38" evidence="8"/>
<dbReference type="EC" id="4.2.3.5" evidence="8"/>
<dbReference type="EMBL" id="X60190">
    <property type="protein sequence ID" value="CAA42745.1"/>
    <property type="molecule type" value="Genomic_DNA"/>
</dbReference>
<dbReference type="EMBL" id="X99960">
    <property type="protein sequence ID" value="CAA68214.1"/>
    <property type="molecule type" value="Genomic_DNA"/>
</dbReference>
<dbReference type="EMBL" id="Z72670">
    <property type="protein sequence ID" value="CAA96860.1"/>
    <property type="molecule type" value="Genomic_DNA"/>
</dbReference>
<dbReference type="EMBL" id="BK006941">
    <property type="protein sequence ID" value="DAA07962.1"/>
    <property type="molecule type" value="Genomic_DNA"/>
</dbReference>
<dbReference type="PIR" id="S17246">
    <property type="entry name" value="S17246"/>
</dbReference>
<dbReference type="RefSeq" id="NP_011367.1">
    <property type="nucleotide sequence ID" value="NM_001181013.1"/>
</dbReference>
<dbReference type="PDB" id="1R52">
    <property type="method" value="X-ray"/>
    <property type="resolution" value="2.89 A"/>
    <property type="chains" value="A/B/C/D=1-376"/>
</dbReference>
<dbReference type="PDB" id="1R53">
    <property type="method" value="X-ray"/>
    <property type="resolution" value="2.20 A"/>
    <property type="chains" value="A=1-376"/>
</dbReference>
<dbReference type="PDBsum" id="1R52"/>
<dbReference type="PDBsum" id="1R53"/>
<dbReference type="SMR" id="P28777"/>
<dbReference type="BioGRID" id="33104">
    <property type="interactions" value="307"/>
</dbReference>
<dbReference type="DIP" id="DIP-4219N"/>
<dbReference type="FunCoup" id="P28777">
    <property type="interactions" value="325"/>
</dbReference>
<dbReference type="IntAct" id="P28777">
    <property type="interactions" value="10"/>
</dbReference>
<dbReference type="MINT" id="P28777"/>
<dbReference type="STRING" id="4932.YGL148W"/>
<dbReference type="GlyGen" id="P28777">
    <property type="glycosylation" value="1 site"/>
</dbReference>
<dbReference type="iPTMnet" id="P28777"/>
<dbReference type="PaxDb" id="4932-YGL148W"/>
<dbReference type="PeptideAtlas" id="P28777"/>
<dbReference type="EnsemblFungi" id="YGL148W_mRNA">
    <property type="protein sequence ID" value="YGL148W"/>
    <property type="gene ID" value="YGL148W"/>
</dbReference>
<dbReference type="GeneID" id="852729"/>
<dbReference type="KEGG" id="sce:YGL148W"/>
<dbReference type="AGR" id="SGD:S000003116"/>
<dbReference type="SGD" id="S000003116">
    <property type="gene designation" value="ARO2"/>
</dbReference>
<dbReference type="VEuPathDB" id="FungiDB:YGL148W"/>
<dbReference type="eggNOG" id="KOG4492">
    <property type="taxonomic scope" value="Eukaryota"/>
</dbReference>
<dbReference type="HOGENOM" id="CLU_034547_0_1_1"/>
<dbReference type="InParanoid" id="P28777"/>
<dbReference type="OMA" id="MLSINAV"/>
<dbReference type="OrthoDB" id="1721239at2759"/>
<dbReference type="BioCyc" id="YEAST:YGL148W-MONOMER"/>
<dbReference type="BRENDA" id="4.2.3.5">
    <property type="organism ID" value="984"/>
</dbReference>
<dbReference type="UniPathway" id="UPA00053">
    <property type="reaction ID" value="UER00090"/>
</dbReference>
<dbReference type="BioGRID-ORCS" id="852729">
    <property type="hits" value="9 hits in 10 CRISPR screens"/>
</dbReference>
<dbReference type="EvolutionaryTrace" id="P28777"/>
<dbReference type="PRO" id="PR:P28777"/>
<dbReference type="Proteomes" id="UP000002311">
    <property type="component" value="Chromosome VII"/>
</dbReference>
<dbReference type="RNAct" id="P28777">
    <property type="molecule type" value="protein"/>
</dbReference>
<dbReference type="GO" id="GO:0005737">
    <property type="term" value="C:cytoplasm"/>
    <property type="evidence" value="ECO:0000314"/>
    <property type="project" value="SGD"/>
</dbReference>
<dbReference type="GO" id="GO:0005829">
    <property type="term" value="C:cytosol"/>
    <property type="evidence" value="ECO:0000318"/>
    <property type="project" value="GO_Central"/>
</dbReference>
<dbReference type="GO" id="GO:0004107">
    <property type="term" value="F:chorismate synthase activity"/>
    <property type="evidence" value="ECO:0000314"/>
    <property type="project" value="SGD"/>
</dbReference>
<dbReference type="GO" id="GO:0010181">
    <property type="term" value="F:FMN binding"/>
    <property type="evidence" value="ECO:0000318"/>
    <property type="project" value="GO_Central"/>
</dbReference>
<dbReference type="GO" id="GO:0052873">
    <property type="term" value="F:FMN reductase (NADPH) activity"/>
    <property type="evidence" value="ECO:0007669"/>
    <property type="project" value="RHEA"/>
</dbReference>
<dbReference type="GO" id="GO:0042602">
    <property type="term" value="F:riboflavin reductase (NADPH) activity"/>
    <property type="evidence" value="ECO:0000314"/>
    <property type="project" value="SGD"/>
</dbReference>
<dbReference type="GO" id="GO:0008652">
    <property type="term" value="P:amino acid biosynthetic process"/>
    <property type="evidence" value="ECO:0007669"/>
    <property type="project" value="UniProtKB-KW"/>
</dbReference>
<dbReference type="GO" id="GO:0009073">
    <property type="term" value="P:aromatic amino acid family biosynthetic process"/>
    <property type="evidence" value="ECO:0000315"/>
    <property type="project" value="SGD"/>
</dbReference>
<dbReference type="GO" id="GO:0009423">
    <property type="term" value="P:chorismate biosynthetic process"/>
    <property type="evidence" value="ECO:0000318"/>
    <property type="project" value="GO_Central"/>
</dbReference>
<dbReference type="CDD" id="cd07304">
    <property type="entry name" value="Chorismate_synthase"/>
    <property type="match status" value="1"/>
</dbReference>
<dbReference type="FunFam" id="3.60.150.10:FF:000006">
    <property type="entry name" value="Chorismate synthase"/>
    <property type="match status" value="1"/>
</dbReference>
<dbReference type="FunFam" id="3.60.150.10:FF:000009">
    <property type="entry name" value="Chorismate synthase"/>
    <property type="match status" value="1"/>
</dbReference>
<dbReference type="Gene3D" id="3.60.150.10">
    <property type="entry name" value="Chorismate synthase AroC"/>
    <property type="match status" value="2"/>
</dbReference>
<dbReference type="HAMAP" id="MF_00300">
    <property type="entry name" value="Chorismate_synth"/>
    <property type="match status" value="1"/>
</dbReference>
<dbReference type="InterPro" id="IPR000453">
    <property type="entry name" value="Chorismate_synth"/>
</dbReference>
<dbReference type="InterPro" id="IPR035904">
    <property type="entry name" value="Chorismate_synth_AroC_sf"/>
</dbReference>
<dbReference type="InterPro" id="IPR020541">
    <property type="entry name" value="Chorismate_synthase_CS"/>
</dbReference>
<dbReference type="NCBIfam" id="TIGR00033">
    <property type="entry name" value="aroC"/>
    <property type="match status" value="1"/>
</dbReference>
<dbReference type="NCBIfam" id="NF003793">
    <property type="entry name" value="PRK05382.1"/>
    <property type="match status" value="1"/>
</dbReference>
<dbReference type="PANTHER" id="PTHR21085">
    <property type="entry name" value="CHORISMATE SYNTHASE"/>
    <property type="match status" value="1"/>
</dbReference>
<dbReference type="PANTHER" id="PTHR21085:SF0">
    <property type="entry name" value="CHORISMATE SYNTHASE"/>
    <property type="match status" value="1"/>
</dbReference>
<dbReference type="Pfam" id="PF01264">
    <property type="entry name" value="Chorismate_synt"/>
    <property type="match status" value="1"/>
</dbReference>
<dbReference type="PIRSF" id="PIRSF001456">
    <property type="entry name" value="Chorismate_synth"/>
    <property type="match status" value="1"/>
</dbReference>
<dbReference type="SUPFAM" id="SSF103263">
    <property type="entry name" value="Chorismate synthase, AroC"/>
    <property type="match status" value="1"/>
</dbReference>
<dbReference type="PROSITE" id="PS00787">
    <property type="entry name" value="CHORISMATE_SYNTHASE_1"/>
    <property type="match status" value="1"/>
</dbReference>
<dbReference type="PROSITE" id="PS00788">
    <property type="entry name" value="CHORISMATE_SYNTHASE_2"/>
    <property type="match status" value="1"/>
</dbReference>
<dbReference type="PROSITE" id="PS00789">
    <property type="entry name" value="CHORISMATE_SYNTHASE_3"/>
    <property type="match status" value="1"/>
</dbReference>
<evidence type="ECO:0000250" key="1">
    <source>
        <dbReference type="UniProtKB" id="Q12640"/>
    </source>
</evidence>
<evidence type="ECO:0000256" key="2">
    <source>
        <dbReference type="SAM" id="MobiDB-lite"/>
    </source>
</evidence>
<evidence type="ECO:0000269" key="3">
    <source>
    </source>
</evidence>
<evidence type="ECO:0000269" key="4">
    <source>
    </source>
</evidence>
<evidence type="ECO:0000269" key="5">
    <source>
    </source>
</evidence>
<evidence type="ECO:0000269" key="6">
    <source>
    </source>
</evidence>
<evidence type="ECO:0000269" key="7">
    <source>
    </source>
</evidence>
<evidence type="ECO:0000269" key="8">
    <source>
    </source>
</evidence>
<evidence type="ECO:0000303" key="9">
    <source>
    </source>
</evidence>
<evidence type="ECO:0000303" key="10">
    <source>
    </source>
</evidence>
<evidence type="ECO:0000305" key="11"/>
<evidence type="ECO:0007744" key="12">
    <source>
        <dbReference type="PDB" id="1R52"/>
    </source>
</evidence>
<evidence type="ECO:0007744" key="13">
    <source>
        <dbReference type="PDB" id="1R53"/>
    </source>
</evidence>
<evidence type="ECO:0007744" key="14">
    <source>
    </source>
</evidence>
<evidence type="ECO:0007829" key="15">
    <source>
        <dbReference type="PDB" id="1R52"/>
    </source>
</evidence>
<evidence type="ECO:0007829" key="16">
    <source>
        <dbReference type="PDB" id="1R53"/>
    </source>
</evidence>
<name>AROC_YEAST</name>
<sequence length="376" mass="40838">MSTFGKLFRVTTYGESHCKSVGCIVDGVPPGMSLTEADIQPQLTRRRPGQSKLSTPRDEKDRVEIQSGTEFGKTLGTPIAMMIKNEDQRPHDYSDMDKFPRPSHADFTYSEKYGIKASSGGGRASARETIGRVASGAIAEKFLAQNSNVEIVAFVTQIGEIKMNRDSFDPEFQHLLNTITREKVDSMGPIRCPDASVAGLMVKEIEKYRGNKDSIGGVVTCVVRNLPTGLGEPCFDKLEAMLAHAMLSIPASKGFEIGSGFQGVSVPGSKHNDPFYFEKETNRLRTKTNNSGGVQGGISNGENIYFSVPFKSVATISQEQKTATYDGEEGILAAKGRHDPAVTPRAIPIVEAMTALVLADALLIQKARDFSRSVVH</sequence>
<reference key="1">
    <citation type="journal article" date="1991" name="Mol. Microbiol.">
        <title>Molecular cloning, characterization and analysis of the regulation of the ARO2 gene, encoding chorismate synthase, of Saccharomyces cerevisiae.</title>
        <authorList>
            <person name="Jones D.G.L."/>
            <person name="Reusser U."/>
            <person name="Braus G.H."/>
        </authorList>
    </citation>
    <scope>NUCLEOTIDE SEQUENCE [GENOMIC DNA]</scope>
    <scope>INDUCTION</scope>
    <source>
        <strain>ATCC 204508 / S288c</strain>
    </source>
</reference>
<reference key="2">
    <citation type="journal article" date="1997" name="Yeast">
        <title>The sequence of a nearly unclonable 22.8 kb segment on the left arm chromosome VII from Saccharomyces cerevisiae reveals ARO2, RPL9A, TIP1, MRF1 genes and six new open reading frames.</title>
        <authorList>
            <person name="Voet M."/>
            <person name="Defoor E."/>
            <person name="Verhasselt P."/>
            <person name="Riles L."/>
            <person name="Robben J."/>
            <person name="Volckaert G."/>
        </authorList>
    </citation>
    <scope>NUCLEOTIDE SEQUENCE [GENOMIC DNA]</scope>
    <source>
        <strain>ATCC 96604 / S288c / FY1679</strain>
    </source>
</reference>
<reference key="3">
    <citation type="journal article" date="1997" name="Nature">
        <title>The nucleotide sequence of Saccharomyces cerevisiae chromosome VII.</title>
        <authorList>
            <person name="Tettelin H."/>
            <person name="Agostoni-Carbone M.L."/>
            <person name="Albermann K."/>
            <person name="Albers M."/>
            <person name="Arroyo J."/>
            <person name="Backes U."/>
            <person name="Barreiros T."/>
            <person name="Bertani I."/>
            <person name="Bjourson A.J."/>
            <person name="Brueckner M."/>
            <person name="Bruschi C.V."/>
            <person name="Carignani G."/>
            <person name="Castagnoli L."/>
            <person name="Cerdan E."/>
            <person name="Clemente M.L."/>
            <person name="Coblenz A."/>
            <person name="Coglievina M."/>
            <person name="Coissac E."/>
            <person name="Defoor E."/>
            <person name="Del Bino S."/>
            <person name="Delius H."/>
            <person name="Delneri D."/>
            <person name="de Wergifosse P."/>
            <person name="Dujon B."/>
            <person name="Durand P."/>
            <person name="Entian K.-D."/>
            <person name="Eraso P."/>
            <person name="Escribano V."/>
            <person name="Fabiani L."/>
            <person name="Fartmann B."/>
            <person name="Feroli F."/>
            <person name="Feuermann M."/>
            <person name="Frontali L."/>
            <person name="Garcia-Gonzalez M."/>
            <person name="Garcia-Saez M.I."/>
            <person name="Goffeau A."/>
            <person name="Guerreiro P."/>
            <person name="Hani J."/>
            <person name="Hansen M."/>
            <person name="Hebling U."/>
            <person name="Hernandez K."/>
            <person name="Heumann K."/>
            <person name="Hilger F."/>
            <person name="Hofmann B."/>
            <person name="Indge K.J."/>
            <person name="James C.M."/>
            <person name="Klima R."/>
            <person name="Koetter P."/>
            <person name="Kramer B."/>
            <person name="Kramer W."/>
            <person name="Lauquin G."/>
            <person name="Leuther H."/>
            <person name="Louis E.J."/>
            <person name="Maillier E."/>
            <person name="Marconi A."/>
            <person name="Martegani E."/>
            <person name="Mazon M.J."/>
            <person name="Mazzoni C."/>
            <person name="McReynolds A.D.K."/>
            <person name="Melchioretto P."/>
            <person name="Mewes H.-W."/>
            <person name="Minenkova O."/>
            <person name="Mueller-Auer S."/>
            <person name="Nawrocki A."/>
            <person name="Netter P."/>
            <person name="Neu R."/>
            <person name="Nombela C."/>
            <person name="Oliver S.G."/>
            <person name="Panzeri L."/>
            <person name="Paoluzi S."/>
            <person name="Plevani P."/>
            <person name="Portetelle D."/>
            <person name="Portillo F."/>
            <person name="Potier S."/>
            <person name="Purnelle B."/>
            <person name="Rieger M."/>
            <person name="Riles L."/>
            <person name="Rinaldi T."/>
            <person name="Robben J."/>
            <person name="Rodrigues-Pousada C."/>
            <person name="Rodriguez-Belmonte E."/>
            <person name="Rodriguez-Torres A.M."/>
            <person name="Rose M."/>
            <person name="Ruzzi M."/>
            <person name="Saliola M."/>
            <person name="Sanchez-Perez M."/>
            <person name="Schaefer B."/>
            <person name="Schaefer M."/>
            <person name="Scharfe M."/>
            <person name="Schmidheini T."/>
            <person name="Schreer A."/>
            <person name="Skala J."/>
            <person name="Souciet J.-L."/>
            <person name="Steensma H.Y."/>
            <person name="Talla E."/>
            <person name="Thierry A."/>
            <person name="Vandenbol M."/>
            <person name="van der Aart Q.J.M."/>
            <person name="Van Dyck L."/>
            <person name="Vanoni M."/>
            <person name="Verhasselt P."/>
            <person name="Voet M."/>
            <person name="Volckaert G."/>
            <person name="Wambutt R."/>
            <person name="Watson M.D."/>
            <person name="Weber N."/>
            <person name="Wedler E."/>
            <person name="Wedler H."/>
            <person name="Wipfli P."/>
            <person name="Wolf K."/>
            <person name="Wright L.F."/>
            <person name="Zaccaria P."/>
            <person name="Zimmermann M."/>
            <person name="Zollner A."/>
            <person name="Kleine K."/>
        </authorList>
    </citation>
    <scope>NUCLEOTIDE SEQUENCE [LARGE SCALE GENOMIC DNA]</scope>
    <source>
        <strain>ATCC 204508 / S288c</strain>
    </source>
</reference>
<reference key="4">
    <citation type="journal article" date="2014" name="G3 (Bethesda)">
        <title>The reference genome sequence of Saccharomyces cerevisiae: Then and now.</title>
        <authorList>
            <person name="Engel S.R."/>
            <person name="Dietrich F.S."/>
            <person name="Fisk D.G."/>
            <person name="Binkley G."/>
            <person name="Balakrishnan R."/>
            <person name="Costanzo M.C."/>
            <person name="Dwight S.S."/>
            <person name="Hitz B.C."/>
            <person name="Karra K."/>
            <person name="Nash R.S."/>
            <person name="Weng S."/>
            <person name="Wong E.D."/>
            <person name="Lloyd P."/>
            <person name="Skrzypek M.S."/>
            <person name="Miyasato S.R."/>
            <person name="Simison M."/>
            <person name="Cherry J.M."/>
        </authorList>
    </citation>
    <scope>GENOME REANNOTATION</scope>
    <source>
        <strain>ATCC 204508 / S288c</strain>
    </source>
</reference>
<reference key="5">
    <citation type="journal article" date="1978" name="J. Bacteriol.">
        <title>Effect of mutation in the aromatic amino acid pathway on sporulation of Saccharomyces cerevisiae.</title>
        <authorList>
            <person name="Lucchini G."/>
            <person name="Biraghi A."/>
            <person name="Carbone M.L."/>
            <person name="de Scrilli A."/>
            <person name="Magni G.E."/>
        </authorList>
    </citation>
    <scope>FUNCTION</scope>
    <scope>DISRUPTION PHENOTYPE</scope>
    <scope>PATHWAY</scope>
</reference>
<reference key="6">
    <citation type="journal article" date="1996" name="Mol. Microbiol.">
        <title>Saccharomyces cerevisiae chorismate synthase has a flavin reductase activity.</title>
        <authorList>
            <person name="Henstrand J.M."/>
            <person name="Schaller A."/>
            <person name="Braun M."/>
            <person name="Amrhein N."/>
            <person name="Schmid J."/>
        </authorList>
    </citation>
    <scope>FUNCTION</scope>
    <scope>CATALYTIC ACTIVITY</scope>
    <scope>PATHWAY</scope>
</reference>
<reference key="7">
    <citation type="journal article" date="2003" name="Nature">
        <title>Global analysis of protein expression in yeast.</title>
        <authorList>
            <person name="Ghaemmaghami S."/>
            <person name="Huh W.-K."/>
            <person name="Bower K."/>
            <person name="Howson R.W."/>
            <person name="Belle A."/>
            <person name="Dephoure N."/>
            <person name="O'Shea E.K."/>
            <person name="Weissman J.S."/>
        </authorList>
    </citation>
    <scope>LEVEL OF PROTEIN EXPRESSION [LARGE SCALE ANALYSIS]</scope>
</reference>
<reference key="8">
    <citation type="journal article" date="2008" name="Mol. Cell. Proteomics">
        <title>A multidimensional chromatography technology for in-depth phosphoproteome analysis.</title>
        <authorList>
            <person name="Albuquerque C.P."/>
            <person name="Smolka M.B."/>
            <person name="Payne S.H."/>
            <person name="Bafna V."/>
            <person name="Eng J."/>
            <person name="Zhou H."/>
        </authorList>
    </citation>
    <scope>IDENTIFICATION BY MASS SPECTROMETRY [LARGE SCALE ANALYSIS]</scope>
</reference>
<reference key="9">
    <citation type="journal article" date="2012" name="Nat. Cell Biol.">
        <title>Dissecting DNA damage response pathways by analysing protein localization and abundance changes during DNA replication stress.</title>
        <authorList>
            <person name="Tkach J.M."/>
            <person name="Yimit A."/>
            <person name="Lee A.Y."/>
            <person name="Riffle M."/>
            <person name="Costanzo M."/>
            <person name="Jaschob D."/>
            <person name="Hendry J.A."/>
            <person name="Ou J."/>
            <person name="Moffat J."/>
            <person name="Boone C."/>
            <person name="Davis T.N."/>
            <person name="Nislow C."/>
            <person name="Brown G.W."/>
        </authorList>
    </citation>
    <scope>INDUCTION</scope>
</reference>
<reference key="10">
    <citation type="journal article" date="2012" name="Proc. Natl. Acad. Sci. U.S.A.">
        <title>N-terminal acetylome analyses and functional insights of the N-terminal acetyltransferase NatB.</title>
        <authorList>
            <person name="Van Damme P."/>
            <person name="Lasa M."/>
            <person name="Polevoda B."/>
            <person name="Gazquez C."/>
            <person name="Elosegui-Artola A."/>
            <person name="Kim D.S."/>
            <person name="De Juan-Pardo E."/>
            <person name="Demeyer K."/>
            <person name="Hole K."/>
            <person name="Larrea E."/>
            <person name="Timmerman E."/>
            <person name="Prieto J."/>
            <person name="Arnesen T."/>
            <person name="Sherman F."/>
            <person name="Gevaert K."/>
            <person name="Aldabe R."/>
        </authorList>
    </citation>
    <scope>ACETYLATION [LARGE SCALE ANALYSIS] AT SER-2</scope>
    <scope>CLEAVAGE OF INITIATOR METHIONINE [LARGE SCALE ANALYSIS]</scope>
    <scope>IDENTIFICATION BY MASS SPECTROMETRY [LARGE SCALE ANALYSIS]</scope>
</reference>
<reference evidence="12 13" key="11">
    <citation type="journal article" date="2004" name="J. Biol. Chem.">
        <title>Crystal structure of the bifunctional chorismate synthase from Saccharomyces cerevisiae.</title>
        <authorList>
            <person name="Quevillon-Cheruel S."/>
            <person name="Leulliot N."/>
            <person name="Meyer P."/>
            <person name="Graille M."/>
            <person name="Bremang M."/>
            <person name="Blondeau K."/>
            <person name="Sorel I."/>
            <person name="Poupon A."/>
            <person name="Janin J."/>
            <person name="van Tilbeurgh H."/>
        </authorList>
    </citation>
    <scope>X-RAY CRYSTALLOGRAPHY (2.20 ANGSTROMS)</scope>
    <scope>SUBUNIT</scope>
</reference>
<proteinExistence type="evidence at protein level"/>
<keyword id="KW-0002">3D-structure</keyword>
<keyword id="KW-0007">Acetylation</keyword>
<keyword id="KW-0028">Amino-acid biosynthesis</keyword>
<keyword id="KW-0057">Aromatic amino acid biosynthesis</keyword>
<keyword id="KW-0285">Flavoprotein</keyword>
<keyword id="KW-0288">FMN</keyword>
<keyword id="KW-0456">Lyase</keyword>
<keyword id="KW-0560">Oxidoreductase</keyword>
<keyword id="KW-1185">Reference proteome</keyword>
<keyword id="KW-0346">Stress response</keyword>
<comment type="function">
    <text evidence="8">Bifunctional chorismate synthase and flavin reductase that catalyzes the conversion of 5-enolpyruvylshikimate 3-phosphate (EPSP) to form chorismate, which is the last common intermediate in the synthesis of the three aromatic amino acids phenylalanine, tyrosine and tryptophan (PubMed:8971708). Also acts as a flavin reductase (FR) able to generate reduced flavin mononucleotide in the presence of NADPH (PubMed:8971708).</text>
</comment>
<comment type="catalytic activity">
    <reaction evidence="8">
        <text>5-O-(1-carboxyvinyl)-3-phosphoshikimate = chorismate + phosphate</text>
        <dbReference type="Rhea" id="RHEA:21020"/>
        <dbReference type="ChEBI" id="CHEBI:29748"/>
        <dbReference type="ChEBI" id="CHEBI:43474"/>
        <dbReference type="ChEBI" id="CHEBI:57701"/>
        <dbReference type="EC" id="4.2.3.5"/>
    </reaction>
    <physiologicalReaction direction="left-to-right" evidence="8">
        <dbReference type="Rhea" id="RHEA:21021"/>
    </physiologicalReaction>
</comment>
<comment type="catalytic activity">
    <reaction evidence="8">
        <text>FMNH2 + NADP(+) = FMN + NADPH + 2 H(+)</text>
        <dbReference type="Rhea" id="RHEA:21624"/>
        <dbReference type="ChEBI" id="CHEBI:15378"/>
        <dbReference type="ChEBI" id="CHEBI:57618"/>
        <dbReference type="ChEBI" id="CHEBI:57783"/>
        <dbReference type="ChEBI" id="CHEBI:58210"/>
        <dbReference type="ChEBI" id="CHEBI:58349"/>
        <dbReference type="EC" id="1.5.1.38"/>
    </reaction>
    <physiologicalReaction direction="right-to-left" evidence="8">
        <dbReference type="Rhea" id="RHEA:21626"/>
    </physiologicalReaction>
</comment>
<comment type="pathway">
    <text evidence="7 8">Metabolic intermediate biosynthesis; chorismate biosynthesis; chorismate from D-erythrose 4-phosphate and phosphoenolpyruvate: step 7/7.</text>
</comment>
<comment type="subunit">
    <text evidence="4">Homotetramer.</text>
</comment>
<comment type="induction">
    <text evidence="5 6">By amino acid starvation (PubMed:1837329). Expression is increased in response to DNA replication stress (PubMed:22842922).</text>
</comment>
<comment type="disruption phenotype">
    <text evidence="7">Impairs sporulation, probably by blocking the biosynthesis of aromatic amino acids.</text>
</comment>
<comment type="miscellaneous">
    <text evidence="3">Present with 2310 molecules/cell in log phase SD medium.</text>
</comment>
<comment type="similarity">
    <text evidence="11">Belongs to the chorismate synthase family.</text>
</comment>
<organism>
    <name type="scientific">Saccharomyces cerevisiae (strain ATCC 204508 / S288c)</name>
    <name type="common">Baker's yeast</name>
    <dbReference type="NCBI Taxonomy" id="559292"/>
    <lineage>
        <taxon>Eukaryota</taxon>
        <taxon>Fungi</taxon>
        <taxon>Dikarya</taxon>
        <taxon>Ascomycota</taxon>
        <taxon>Saccharomycotina</taxon>
        <taxon>Saccharomycetes</taxon>
        <taxon>Saccharomycetales</taxon>
        <taxon>Saccharomycetaceae</taxon>
        <taxon>Saccharomyces</taxon>
    </lineage>
</organism>
<accession>P28777</accession>
<accession>D6VU01</accession>
<protein>
    <recommendedName>
        <fullName evidence="9">Chorismate synthase ARO2</fullName>
        <ecNumber evidence="8">1.5.1.38</ecNumber>
        <ecNumber evidence="8">4.2.3.5</ecNumber>
    </recommendedName>
    <alternativeName>
        <fullName evidence="9">5-enolpyruvylshikimate-3-phosphate phospholyase</fullName>
    </alternativeName>
    <alternativeName>
        <fullName evidence="10">Aromatic amino acid requiring protein 2</fullName>
    </alternativeName>
</protein>
<feature type="initiator methionine" description="Removed" evidence="14">
    <location>
        <position position="1"/>
    </location>
</feature>
<feature type="chain" id="PRO_0000140704" description="Chorismate synthase ARO2">
    <location>
        <begin position="2"/>
        <end position="376"/>
    </location>
</feature>
<feature type="region of interest" description="Disordered" evidence="2">
    <location>
        <begin position="39"/>
        <end position="61"/>
    </location>
</feature>
<feature type="active site" evidence="1">
    <location>
        <position position="17"/>
    </location>
</feature>
<feature type="active site" evidence="1">
    <location>
        <position position="104"/>
    </location>
</feature>
<feature type="active site" evidence="1">
    <location>
        <position position="339"/>
    </location>
</feature>
<feature type="modified residue" description="N-acetylserine" evidence="14">
    <location>
        <position position="2"/>
    </location>
</feature>
<feature type="strand" evidence="16">
    <location>
        <begin position="6"/>
        <end position="13"/>
    </location>
</feature>
<feature type="strand" evidence="16">
    <location>
        <begin position="18"/>
        <end position="26"/>
    </location>
</feature>
<feature type="strand" evidence="15">
    <location>
        <begin position="30"/>
        <end position="33"/>
    </location>
</feature>
<feature type="helix" evidence="16">
    <location>
        <begin position="36"/>
        <end position="38"/>
    </location>
</feature>
<feature type="helix" evidence="16">
    <location>
        <begin position="40"/>
        <end position="44"/>
    </location>
</feature>
<feature type="strand" evidence="15">
    <location>
        <begin position="63"/>
        <end position="65"/>
    </location>
</feature>
<feature type="strand" evidence="16">
    <location>
        <begin position="67"/>
        <end position="70"/>
    </location>
</feature>
<feature type="strand" evidence="16">
    <location>
        <begin position="79"/>
        <end position="84"/>
    </location>
</feature>
<feature type="helix" evidence="16">
    <location>
        <begin position="130"/>
        <end position="145"/>
    </location>
</feature>
<feature type="strand" evidence="16">
    <location>
        <begin position="150"/>
        <end position="158"/>
    </location>
</feature>
<feature type="helix" evidence="16">
    <location>
        <begin position="170"/>
        <end position="178"/>
    </location>
</feature>
<feature type="helix" evidence="16">
    <location>
        <begin position="181"/>
        <end position="186"/>
    </location>
</feature>
<feature type="helix" evidence="16">
    <location>
        <begin position="195"/>
        <end position="210"/>
    </location>
</feature>
<feature type="strand" evidence="16">
    <location>
        <begin position="217"/>
        <end position="225"/>
    </location>
</feature>
<feature type="turn" evidence="16">
    <location>
        <begin position="233"/>
        <end position="235"/>
    </location>
</feature>
<feature type="helix" evidence="16">
    <location>
        <begin position="238"/>
        <end position="247"/>
    </location>
</feature>
<feature type="strand" evidence="15">
    <location>
        <begin position="254"/>
        <end position="257"/>
    </location>
</feature>
<feature type="turn" evidence="16">
    <location>
        <begin position="258"/>
        <end position="261"/>
    </location>
</feature>
<feature type="helix" evidence="16">
    <location>
        <begin position="262"/>
        <end position="265"/>
    </location>
</feature>
<feature type="helix" evidence="16">
    <location>
        <begin position="268"/>
        <end position="272"/>
    </location>
</feature>
<feature type="strand" evidence="16">
    <location>
        <begin position="293"/>
        <end position="295"/>
    </location>
</feature>
<feature type="strand" evidence="16">
    <location>
        <begin position="304"/>
        <end position="310"/>
    </location>
</feature>
<feature type="helix" evidence="16">
    <location>
        <begin position="342"/>
        <end position="345"/>
    </location>
</feature>
<feature type="helix" evidence="16">
    <location>
        <begin position="347"/>
        <end position="370"/>
    </location>
</feature>
<gene>
    <name evidence="10" type="primary">ARO2</name>
    <name type="ordered locus">YGL148W</name>
</gene>